<keyword id="KW-0004">4Fe-4S</keyword>
<keyword id="KW-0408">Iron</keyword>
<keyword id="KW-0411">Iron-sulfur</keyword>
<keyword id="KW-0414">Isoprene biosynthesis</keyword>
<keyword id="KW-0479">Metal-binding</keyword>
<keyword id="KW-0560">Oxidoreductase</keyword>
<keyword id="KW-1185">Reference proteome</keyword>
<proteinExistence type="inferred from homology"/>
<sequence length="388" mass="41001">MTSVNLGMPAAPQPVLSPRRKTRQIRVGSVGVGSDSPISVQSMTTTPTTNINATLQQIAELNAAGCDIVRVACPSQDDADALPIIAKKSPIPVIADIHFQPKYVYAAIDAGCAGVRVNPGNIRKFDDQIEGISRAAEAAGVSIRIGVNAGSLDKRLLEKYGKATPEALMESAVWEASLFEQHDFHDFKISVKHNDPVTMVRAYQLLAERGDWPLHLGVTEAGPALQGTVKSATAFGILLSQGIGDTIRVSLSAPPVEEVKVGNQILQSLGLRPRKLEIVSCPSCGRAQVDVYKLAEEVNEGLAHLTVPLRVAVMGCVVNGPGEAREADLGVASGNGKGQIFVRGEVIKTVPEDQIVETLLAQANEMAESMELDENGQPVEGAPVVTAG</sequence>
<accession>B2GKS3</accession>
<dbReference type="EC" id="1.17.7.3" evidence="1"/>
<dbReference type="EMBL" id="AP009152">
    <property type="protein sequence ID" value="BAG29959.1"/>
    <property type="molecule type" value="Genomic_DNA"/>
</dbReference>
<dbReference type="RefSeq" id="WP_012398680.1">
    <property type="nucleotide sequence ID" value="NC_010617.1"/>
</dbReference>
<dbReference type="SMR" id="B2GKS3"/>
<dbReference type="STRING" id="378753.KRH_16120"/>
<dbReference type="KEGG" id="krh:KRH_16120"/>
<dbReference type="eggNOG" id="COG0821">
    <property type="taxonomic scope" value="Bacteria"/>
</dbReference>
<dbReference type="HOGENOM" id="CLU_042258_0_0_11"/>
<dbReference type="OrthoDB" id="9803214at2"/>
<dbReference type="UniPathway" id="UPA00056">
    <property type="reaction ID" value="UER00096"/>
</dbReference>
<dbReference type="Proteomes" id="UP000008838">
    <property type="component" value="Chromosome"/>
</dbReference>
<dbReference type="GO" id="GO:0051539">
    <property type="term" value="F:4 iron, 4 sulfur cluster binding"/>
    <property type="evidence" value="ECO:0007669"/>
    <property type="project" value="UniProtKB-UniRule"/>
</dbReference>
<dbReference type="GO" id="GO:0046429">
    <property type="term" value="F:4-hydroxy-3-methylbut-2-en-1-yl diphosphate synthase activity (ferredoxin)"/>
    <property type="evidence" value="ECO:0007669"/>
    <property type="project" value="UniProtKB-UniRule"/>
</dbReference>
<dbReference type="GO" id="GO:0141197">
    <property type="term" value="F:4-hydroxy-3-methylbut-2-enyl-diphosphate synthase activity (flavodoxin)"/>
    <property type="evidence" value="ECO:0007669"/>
    <property type="project" value="UniProtKB-EC"/>
</dbReference>
<dbReference type="GO" id="GO:0005506">
    <property type="term" value="F:iron ion binding"/>
    <property type="evidence" value="ECO:0007669"/>
    <property type="project" value="InterPro"/>
</dbReference>
<dbReference type="GO" id="GO:0019288">
    <property type="term" value="P:isopentenyl diphosphate biosynthetic process, methylerythritol 4-phosphate pathway"/>
    <property type="evidence" value="ECO:0007669"/>
    <property type="project" value="UniProtKB-UniRule"/>
</dbReference>
<dbReference type="GO" id="GO:0016114">
    <property type="term" value="P:terpenoid biosynthetic process"/>
    <property type="evidence" value="ECO:0007669"/>
    <property type="project" value="InterPro"/>
</dbReference>
<dbReference type="FunFam" id="3.20.20.20:FF:000001">
    <property type="entry name" value="4-hydroxy-3-methylbut-2-en-1-yl diphosphate synthase (flavodoxin)"/>
    <property type="match status" value="1"/>
</dbReference>
<dbReference type="Gene3D" id="3.20.20.20">
    <property type="entry name" value="Dihydropteroate synthase-like"/>
    <property type="match status" value="1"/>
</dbReference>
<dbReference type="Gene3D" id="3.30.413.10">
    <property type="entry name" value="Sulfite Reductase Hemoprotein, domain 1"/>
    <property type="match status" value="1"/>
</dbReference>
<dbReference type="HAMAP" id="MF_00159">
    <property type="entry name" value="IspG"/>
    <property type="match status" value="1"/>
</dbReference>
<dbReference type="InterPro" id="IPR011005">
    <property type="entry name" value="Dihydropteroate_synth-like_sf"/>
</dbReference>
<dbReference type="InterPro" id="IPR016425">
    <property type="entry name" value="IspG_bac"/>
</dbReference>
<dbReference type="InterPro" id="IPR004588">
    <property type="entry name" value="IspG_bac-typ"/>
</dbReference>
<dbReference type="InterPro" id="IPR045854">
    <property type="entry name" value="NO2/SO3_Rdtase_4Fe4S_sf"/>
</dbReference>
<dbReference type="NCBIfam" id="TIGR00612">
    <property type="entry name" value="ispG_gcpE"/>
    <property type="match status" value="1"/>
</dbReference>
<dbReference type="NCBIfam" id="NF001540">
    <property type="entry name" value="PRK00366.1"/>
    <property type="match status" value="1"/>
</dbReference>
<dbReference type="PANTHER" id="PTHR30454">
    <property type="entry name" value="4-HYDROXY-3-METHYLBUT-2-EN-1-YL DIPHOSPHATE SYNTHASE"/>
    <property type="match status" value="1"/>
</dbReference>
<dbReference type="PANTHER" id="PTHR30454:SF0">
    <property type="entry name" value="4-HYDROXY-3-METHYLBUT-2-EN-1-YL DIPHOSPHATE SYNTHASE (FERREDOXIN), CHLOROPLASTIC"/>
    <property type="match status" value="1"/>
</dbReference>
<dbReference type="Pfam" id="PF04551">
    <property type="entry name" value="GcpE"/>
    <property type="match status" value="1"/>
</dbReference>
<dbReference type="PIRSF" id="PIRSF004640">
    <property type="entry name" value="IspG"/>
    <property type="match status" value="1"/>
</dbReference>
<dbReference type="SUPFAM" id="SSF51395">
    <property type="entry name" value="FMN-linked oxidoreductases"/>
    <property type="match status" value="1"/>
</dbReference>
<dbReference type="SUPFAM" id="SSF56014">
    <property type="entry name" value="Nitrite and sulphite reductase 4Fe-4S domain-like"/>
    <property type="match status" value="1"/>
</dbReference>
<evidence type="ECO:0000255" key="1">
    <source>
        <dbReference type="HAMAP-Rule" id="MF_00159"/>
    </source>
</evidence>
<evidence type="ECO:0000256" key="2">
    <source>
        <dbReference type="SAM" id="MobiDB-lite"/>
    </source>
</evidence>
<feature type="chain" id="PRO_1000097167" description="4-hydroxy-3-methylbut-2-en-1-yl diphosphate synthase (flavodoxin)">
    <location>
        <begin position="1"/>
        <end position="388"/>
    </location>
</feature>
<feature type="region of interest" description="Disordered" evidence="2">
    <location>
        <begin position="1"/>
        <end position="22"/>
    </location>
</feature>
<feature type="binding site" evidence="1">
    <location>
        <position position="281"/>
    </location>
    <ligand>
        <name>[4Fe-4S] cluster</name>
        <dbReference type="ChEBI" id="CHEBI:49883"/>
    </ligand>
</feature>
<feature type="binding site" evidence="1">
    <location>
        <position position="284"/>
    </location>
    <ligand>
        <name>[4Fe-4S] cluster</name>
        <dbReference type="ChEBI" id="CHEBI:49883"/>
    </ligand>
</feature>
<feature type="binding site" evidence="1">
    <location>
        <position position="316"/>
    </location>
    <ligand>
        <name>[4Fe-4S] cluster</name>
        <dbReference type="ChEBI" id="CHEBI:49883"/>
    </ligand>
</feature>
<feature type="binding site" evidence="1">
    <location>
        <position position="323"/>
    </location>
    <ligand>
        <name>[4Fe-4S] cluster</name>
        <dbReference type="ChEBI" id="CHEBI:49883"/>
    </ligand>
</feature>
<protein>
    <recommendedName>
        <fullName evidence="1">4-hydroxy-3-methylbut-2-en-1-yl diphosphate synthase (flavodoxin)</fullName>
        <ecNumber evidence="1">1.17.7.3</ecNumber>
    </recommendedName>
    <alternativeName>
        <fullName evidence="1">1-hydroxy-2-methyl-2-(E)-butenyl 4-diphosphate synthase</fullName>
    </alternativeName>
</protein>
<name>ISPG_KOCRD</name>
<reference key="1">
    <citation type="journal article" date="2008" name="J. Bacteriol.">
        <title>Complete genome sequence of the soil actinomycete Kocuria rhizophila.</title>
        <authorList>
            <person name="Takarada H."/>
            <person name="Sekine M."/>
            <person name="Kosugi H."/>
            <person name="Matsuo Y."/>
            <person name="Fujisawa T."/>
            <person name="Omata S."/>
            <person name="Kishi E."/>
            <person name="Shimizu A."/>
            <person name="Tsukatani N."/>
            <person name="Tanikawa S."/>
            <person name="Fujita N."/>
            <person name="Harayama S."/>
        </authorList>
    </citation>
    <scope>NUCLEOTIDE SEQUENCE [LARGE SCALE GENOMIC DNA]</scope>
    <source>
        <strain>ATCC 9341 / DSM 348 / NBRC 103217 / DC2201</strain>
    </source>
</reference>
<comment type="function">
    <text evidence="1">Converts 2C-methyl-D-erythritol 2,4-cyclodiphosphate (ME-2,4cPP) into 1-hydroxy-2-methyl-2-(E)-butenyl 4-diphosphate.</text>
</comment>
<comment type="catalytic activity">
    <reaction evidence="1">
        <text>(2E)-4-hydroxy-3-methylbut-2-enyl diphosphate + oxidized [flavodoxin] + H2O + 2 H(+) = 2-C-methyl-D-erythritol 2,4-cyclic diphosphate + reduced [flavodoxin]</text>
        <dbReference type="Rhea" id="RHEA:43604"/>
        <dbReference type="Rhea" id="RHEA-COMP:10622"/>
        <dbReference type="Rhea" id="RHEA-COMP:10623"/>
        <dbReference type="ChEBI" id="CHEBI:15377"/>
        <dbReference type="ChEBI" id="CHEBI:15378"/>
        <dbReference type="ChEBI" id="CHEBI:57618"/>
        <dbReference type="ChEBI" id="CHEBI:58210"/>
        <dbReference type="ChEBI" id="CHEBI:58483"/>
        <dbReference type="ChEBI" id="CHEBI:128753"/>
        <dbReference type="EC" id="1.17.7.3"/>
    </reaction>
</comment>
<comment type="cofactor">
    <cofactor evidence="1">
        <name>[4Fe-4S] cluster</name>
        <dbReference type="ChEBI" id="CHEBI:49883"/>
    </cofactor>
    <text evidence="1">Binds 1 [4Fe-4S] cluster.</text>
</comment>
<comment type="pathway">
    <text evidence="1">Isoprenoid biosynthesis; isopentenyl diphosphate biosynthesis via DXP pathway; isopentenyl diphosphate from 1-deoxy-D-xylulose 5-phosphate: step 5/6.</text>
</comment>
<comment type="similarity">
    <text evidence="1">Belongs to the IspG family.</text>
</comment>
<gene>
    <name evidence="1" type="primary">ispG</name>
    <name type="ordered locus">KRH_16120</name>
</gene>
<organism>
    <name type="scientific">Kocuria rhizophila (strain ATCC 9341 / DSM 348 / NBRC 103217 / DC2201)</name>
    <dbReference type="NCBI Taxonomy" id="378753"/>
    <lineage>
        <taxon>Bacteria</taxon>
        <taxon>Bacillati</taxon>
        <taxon>Actinomycetota</taxon>
        <taxon>Actinomycetes</taxon>
        <taxon>Micrococcales</taxon>
        <taxon>Micrococcaceae</taxon>
        <taxon>Kocuria</taxon>
    </lineage>
</organism>